<comment type="function">
    <text evidence="1">Involved in peptide bond synthesis. Stimulates efficient translation and peptide-bond synthesis on native or reconstituted 70S ribosomes in vitro. Probably functions indirectly by altering the affinity of the ribosome for aminoacyl-tRNA, thus increasing their reactivity as acceptors for peptidyl transferase.</text>
</comment>
<comment type="pathway">
    <text evidence="1">Protein biosynthesis; polypeptide chain elongation.</text>
</comment>
<comment type="subcellular location">
    <subcellularLocation>
        <location evidence="1">Cytoplasm</location>
    </subcellularLocation>
</comment>
<comment type="similarity">
    <text evidence="1">Belongs to the elongation factor P family.</text>
</comment>
<dbReference type="EMBL" id="AP008981">
    <property type="protein sequence ID" value="BAG39466.1"/>
    <property type="molecule type" value="Genomic_DNA"/>
</dbReference>
<dbReference type="RefSeq" id="WP_012460732.1">
    <property type="nucleotide sequence ID" value="NC_010793.1"/>
</dbReference>
<dbReference type="SMR" id="B3CQC7"/>
<dbReference type="KEGG" id="ott:OTT_0008"/>
<dbReference type="HOGENOM" id="CLU_074944_1_1_5"/>
<dbReference type="OrthoDB" id="9801844at2"/>
<dbReference type="UniPathway" id="UPA00345"/>
<dbReference type="Proteomes" id="UP000001033">
    <property type="component" value="Chromosome"/>
</dbReference>
<dbReference type="GO" id="GO:0005737">
    <property type="term" value="C:cytoplasm"/>
    <property type="evidence" value="ECO:0007669"/>
    <property type="project" value="UniProtKB-SubCell"/>
</dbReference>
<dbReference type="GO" id="GO:0003746">
    <property type="term" value="F:translation elongation factor activity"/>
    <property type="evidence" value="ECO:0007669"/>
    <property type="project" value="UniProtKB-UniRule"/>
</dbReference>
<dbReference type="GO" id="GO:0043043">
    <property type="term" value="P:peptide biosynthetic process"/>
    <property type="evidence" value="ECO:0007669"/>
    <property type="project" value="InterPro"/>
</dbReference>
<dbReference type="CDD" id="cd04470">
    <property type="entry name" value="S1_EF-P_repeat_1"/>
    <property type="match status" value="1"/>
</dbReference>
<dbReference type="CDD" id="cd05794">
    <property type="entry name" value="S1_EF-P_repeat_2"/>
    <property type="match status" value="1"/>
</dbReference>
<dbReference type="FunFam" id="2.40.50.140:FF:000004">
    <property type="entry name" value="Elongation factor P"/>
    <property type="match status" value="1"/>
</dbReference>
<dbReference type="FunFam" id="2.40.50.140:FF:000009">
    <property type="entry name" value="Elongation factor P"/>
    <property type="match status" value="1"/>
</dbReference>
<dbReference type="Gene3D" id="2.30.30.30">
    <property type="match status" value="1"/>
</dbReference>
<dbReference type="Gene3D" id="2.40.50.140">
    <property type="entry name" value="Nucleic acid-binding proteins"/>
    <property type="match status" value="2"/>
</dbReference>
<dbReference type="HAMAP" id="MF_00141">
    <property type="entry name" value="EF_P"/>
    <property type="match status" value="1"/>
</dbReference>
<dbReference type="InterPro" id="IPR015365">
    <property type="entry name" value="Elong-fact-P_C"/>
</dbReference>
<dbReference type="InterPro" id="IPR012340">
    <property type="entry name" value="NA-bd_OB-fold"/>
</dbReference>
<dbReference type="InterPro" id="IPR014722">
    <property type="entry name" value="Rib_uL2_dom2"/>
</dbReference>
<dbReference type="InterPro" id="IPR020599">
    <property type="entry name" value="Transl_elong_fac_P/YeiP"/>
</dbReference>
<dbReference type="InterPro" id="IPR013185">
    <property type="entry name" value="Transl_elong_KOW-like"/>
</dbReference>
<dbReference type="InterPro" id="IPR001059">
    <property type="entry name" value="Transl_elong_P/YeiP_cen"/>
</dbReference>
<dbReference type="InterPro" id="IPR013852">
    <property type="entry name" value="Transl_elong_P/YeiP_CS"/>
</dbReference>
<dbReference type="InterPro" id="IPR011768">
    <property type="entry name" value="Transl_elongation_fac_P"/>
</dbReference>
<dbReference type="InterPro" id="IPR008991">
    <property type="entry name" value="Translation_prot_SH3-like_sf"/>
</dbReference>
<dbReference type="NCBIfam" id="TIGR00038">
    <property type="entry name" value="efp"/>
    <property type="match status" value="1"/>
</dbReference>
<dbReference type="NCBIfam" id="NF001810">
    <property type="entry name" value="PRK00529.1"/>
    <property type="match status" value="1"/>
</dbReference>
<dbReference type="PANTHER" id="PTHR30053">
    <property type="entry name" value="ELONGATION FACTOR P"/>
    <property type="match status" value="1"/>
</dbReference>
<dbReference type="PANTHER" id="PTHR30053:SF14">
    <property type="entry name" value="TRANSLATION ELONGATION FACTOR KOW-LIKE DOMAIN-CONTAINING PROTEIN"/>
    <property type="match status" value="1"/>
</dbReference>
<dbReference type="Pfam" id="PF01132">
    <property type="entry name" value="EFP"/>
    <property type="match status" value="1"/>
</dbReference>
<dbReference type="Pfam" id="PF08207">
    <property type="entry name" value="EFP_N"/>
    <property type="match status" value="1"/>
</dbReference>
<dbReference type="Pfam" id="PF09285">
    <property type="entry name" value="Elong-fact-P_C"/>
    <property type="match status" value="1"/>
</dbReference>
<dbReference type="PIRSF" id="PIRSF005901">
    <property type="entry name" value="EF-P"/>
    <property type="match status" value="1"/>
</dbReference>
<dbReference type="SMART" id="SM01185">
    <property type="entry name" value="EFP"/>
    <property type="match status" value="1"/>
</dbReference>
<dbReference type="SMART" id="SM00841">
    <property type="entry name" value="Elong-fact-P_C"/>
    <property type="match status" value="1"/>
</dbReference>
<dbReference type="SUPFAM" id="SSF50249">
    <property type="entry name" value="Nucleic acid-binding proteins"/>
    <property type="match status" value="2"/>
</dbReference>
<dbReference type="SUPFAM" id="SSF50104">
    <property type="entry name" value="Translation proteins SH3-like domain"/>
    <property type="match status" value="1"/>
</dbReference>
<dbReference type="PROSITE" id="PS01275">
    <property type="entry name" value="EFP"/>
    <property type="match status" value="1"/>
</dbReference>
<keyword id="KW-0963">Cytoplasm</keyword>
<keyword id="KW-0251">Elongation factor</keyword>
<keyword id="KW-0648">Protein biosynthesis</keyword>
<gene>
    <name evidence="1" type="primary">efp</name>
    <name type="ordered locus">OTT_0008</name>
</gene>
<sequence>MKILANAIREGNILEYQNNLWIVSKKPDHTKPGKGGAYIQLEMKNLKTGTKIYERFSSSDYLEKATLEQRNYQYLYQENNHLVLMDLESFEQILVQKSIIASNKLPFLLENTVITVETYKDEPIRLVLPHTVVVEILETSPNIKGATVTASYKPAILSNGAKIMVPPYLSAGEKIVVKLEDISFVERAK</sequence>
<reference key="1">
    <citation type="journal article" date="2008" name="DNA Res.">
        <title>The whole-genome sequencing of the obligate intracellular bacterium Orientia tsutsugamushi revealed massive gene amplification during reductive genome evolution.</title>
        <authorList>
            <person name="Nakayama K."/>
            <person name="Yamashita A."/>
            <person name="Kurokawa K."/>
            <person name="Morimoto T."/>
            <person name="Ogawa M."/>
            <person name="Fukuhara M."/>
            <person name="Urakami H."/>
            <person name="Ohnishi M."/>
            <person name="Uchiyama I."/>
            <person name="Ogura Y."/>
            <person name="Ooka T."/>
            <person name="Oshima K."/>
            <person name="Tamura A."/>
            <person name="Hattori M."/>
            <person name="Hayashi T."/>
        </authorList>
    </citation>
    <scope>NUCLEOTIDE SEQUENCE [LARGE SCALE GENOMIC DNA]</scope>
    <source>
        <strain>Ikeda</strain>
    </source>
</reference>
<name>EFP_ORITI</name>
<accession>B3CQC7</accession>
<protein>
    <recommendedName>
        <fullName evidence="1">Elongation factor P</fullName>
        <shortName evidence="1">EF-P</shortName>
    </recommendedName>
</protein>
<feature type="chain" id="PRO_1000096184" description="Elongation factor P">
    <location>
        <begin position="1"/>
        <end position="189"/>
    </location>
</feature>
<organism>
    <name type="scientific">Orientia tsutsugamushi (strain Ikeda)</name>
    <name type="common">Rickettsia tsutsugamushi</name>
    <dbReference type="NCBI Taxonomy" id="334380"/>
    <lineage>
        <taxon>Bacteria</taxon>
        <taxon>Pseudomonadati</taxon>
        <taxon>Pseudomonadota</taxon>
        <taxon>Alphaproteobacteria</taxon>
        <taxon>Rickettsiales</taxon>
        <taxon>Rickettsiaceae</taxon>
        <taxon>Rickettsieae</taxon>
        <taxon>Orientia</taxon>
    </lineage>
</organism>
<proteinExistence type="inferred from homology"/>
<evidence type="ECO:0000255" key="1">
    <source>
        <dbReference type="HAMAP-Rule" id="MF_00141"/>
    </source>
</evidence>